<proteinExistence type="inferred from homology"/>
<sequence>MAGGPRRGGRRRKKVCYFTANGITHIDYKDTELLKRFISERGKILPRRVTGTSAKYQRMLTTAIKRSRHMALLPYVKEEQ</sequence>
<evidence type="ECO:0000255" key="1">
    <source>
        <dbReference type="HAMAP-Rule" id="MF_00270"/>
    </source>
</evidence>
<evidence type="ECO:0000305" key="2"/>
<feature type="chain" id="PRO_1000003618" description="Small ribosomal subunit protein bS18">
    <location>
        <begin position="1"/>
        <end position="80"/>
    </location>
</feature>
<organism>
    <name type="scientific">Staphylococcus aureus (strain Mu3 / ATCC 700698)</name>
    <dbReference type="NCBI Taxonomy" id="418127"/>
    <lineage>
        <taxon>Bacteria</taxon>
        <taxon>Bacillati</taxon>
        <taxon>Bacillota</taxon>
        <taxon>Bacilli</taxon>
        <taxon>Bacillales</taxon>
        <taxon>Staphylococcaceae</taxon>
        <taxon>Staphylococcus</taxon>
    </lineage>
</organism>
<reference key="1">
    <citation type="journal article" date="2008" name="Antimicrob. Agents Chemother.">
        <title>Mutated response regulator graR is responsible for phenotypic conversion of Staphylococcus aureus from heterogeneous vancomycin-intermediate resistance to vancomycin-intermediate resistance.</title>
        <authorList>
            <person name="Neoh H.-M."/>
            <person name="Cui L."/>
            <person name="Yuzawa H."/>
            <person name="Takeuchi F."/>
            <person name="Matsuo M."/>
            <person name="Hiramatsu K."/>
        </authorList>
    </citation>
    <scope>NUCLEOTIDE SEQUENCE [LARGE SCALE GENOMIC DNA]</scope>
    <source>
        <strain>Mu3 / ATCC 700698</strain>
    </source>
</reference>
<accession>A7WY61</accession>
<gene>
    <name evidence="1" type="primary">rpsR</name>
    <name type="ordered locus">SAHV_0364</name>
</gene>
<dbReference type="EMBL" id="AP009324">
    <property type="protein sequence ID" value="BAF77247.1"/>
    <property type="molecule type" value="Genomic_DNA"/>
</dbReference>
<dbReference type="RefSeq" id="WP_000897044.1">
    <property type="nucleotide sequence ID" value="NZ_CTYB01000007.1"/>
</dbReference>
<dbReference type="SMR" id="A7WY61"/>
<dbReference type="GeneID" id="98344693"/>
<dbReference type="KEGG" id="saw:SAHV_0364"/>
<dbReference type="HOGENOM" id="CLU_148710_2_2_9"/>
<dbReference type="GO" id="GO:0022627">
    <property type="term" value="C:cytosolic small ribosomal subunit"/>
    <property type="evidence" value="ECO:0007669"/>
    <property type="project" value="TreeGrafter"/>
</dbReference>
<dbReference type="GO" id="GO:0070181">
    <property type="term" value="F:small ribosomal subunit rRNA binding"/>
    <property type="evidence" value="ECO:0007669"/>
    <property type="project" value="TreeGrafter"/>
</dbReference>
<dbReference type="GO" id="GO:0003735">
    <property type="term" value="F:structural constituent of ribosome"/>
    <property type="evidence" value="ECO:0007669"/>
    <property type="project" value="InterPro"/>
</dbReference>
<dbReference type="GO" id="GO:0006412">
    <property type="term" value="P:translation"/>
    <property type="evidence" value="ECO:0007669"/>
    <property type="project" value="UniProtKB-UniRule"/>
</dbReference>
<dbReference type="FunFam" id="4.10.640.10:FF:000003">
    <property type="entry name" value="30S ribosomal protein S18"/>
    <property type="match status" value="1"/>
</dbReference>
<dbReference type="Gene3D" id="4.10.640.10">
    <property type="entry name" value="Ribosomal protein S18"/>
    <property type="match status" value="1"/>
</dbReference>
<dbReference type="HAMAP" id="MF_00270">
    <property type="entry name" value="Ribosomal_bS18"/>
    <property type="match status" value="1"/>
</dbReference>
<dbReference type="InterPro" id="IPR001648">
    <property type="entry name" value="Ribosomal_bS18"/>
</dbReference>
<dbReference type="InterPro" id="IPR018275">
    <property type="entry name" value="Ribosomal_bS18_CS"/>
</dbReference>
<dbReference type="InterPro" id="IPR036870">
    <property type="entry name" value="Ribosomal_bS18_sf"/>
</dbReference>
<dbReference type="NCBIfam" id="TIGR00165">
    <property type="entry name" value="S18"/>
    <property type="match status" value="1"/>
</dbReference>
<dbReference type="PANTHER" id="PTHR13479">
    <property type="entry name" value="30S RIBOSOMAL PROTEIN S18"/>
    <property type="match status" value="1"/>
</dbReference>
<dbReference type="PANTHER" id="PTHR13479:SF40">
    <property type="entry name" value="SMALL RIBOSOMAL SUBUNIT PROTEIN BS18M"/>
    <property type="match status" value="1"/>
</dbReference>
<dbReference type="Pfam" id="PF01084">
    <property type="entry name" value="Ribosomal_S18"/>
    <property type="match status" value="1"/>
</dbReference>
<dbReference type="PRINTS" id="PR00974">
    <property type="entry name" value="RIBOSOMALS18"/>
</dbReference>
<dbReference type="SUPFAM" id="SSF46911">
    <property type="entry name" value="Ribosomal protein S18"/>
    <property type="match status" value="1"/>
</dbReference>
<dbReference type="PROSITE" id="PS00057">
    <property type="entry name" value="RIBOSOMAL_S18"/>
    <property type="match status" value="1"/>
</dbReference>
<comment type="function">
    <text evidence="1">Binds as a heterodimer with protein bS6 to the central domain of the 16S rRNA, where it helps stabilize the platform of the 30S subunit.</text>
</comment>
<comment type="subunit">
    <text evidence="1">Part of the 30S ribosomal subunit. Forms a tight heterodimer with protein bS6.</text>
</comment>
<comment type="similarity">
    <text evidence="1">Belongs to the bacterial ribosomal protein bS18 family.</text>
</comment>
<name>RS18_STAA1</name>
<keyword id="KW-0687">Ribonucleoprotein</keyword>
<keyword id="KW-0689">Ribosomal protein</keyword>
<keyword id="KW-0694">RNA-binding</keyword>
<keyword id="KW-0699">rRNA-binding</keyword>
<protein>
    <recommendedName>
        <fullName evidence="1">Small ribosomal subunit protein bS18</fullName>
    </recommendedName>
    <alternativeName>
        <fullName evidence="2">30S ribosomal protein S18</fullName>
    </alternativeName>
</protein>